<dbReference type="EMBL" id="BC112607">
    <property type="protein sequence ID" value="AAI12608.1"/>
    <property type="molecule type" value="mRNA"/>
</dbReference>
<dbReference type="RefSeq" id="NP_001040008.1">
    <property type="nucleotide sequence ID" value="NM_001046543.2"/>
</dbReference>
<dbReference type="RefSeq" id="XP_005207950.1">
    <property type="nucleotide sequence ID" value="XM_005207893.5"/>
</dbReference>
<dbReference type="RefSeq" id="XP_059743629.1">
    <property type="nucleotide sequence ID" value="XM_059887646.1"/>
</dbReference>
<dbReference type="RefSeq" id="XP_059743630.1">
    <property type="nucleotide sequence ID" value="XM_059887647.1"/>
</dbReference>
<dbReference type="RefSeq" id="XP_059743631.1">
    <property type="nucleotide sequence ID" value="XM_059887648.1"/>
</dbReference>
<dbReference type="RefSeq" id="XP_059743632.1">
    <property type="nucleotide sequence ID" value="XM_059887649.1"/>
</dbReference>
<dbReference type="RefSeq" id="XP_059743633.1">
    <property type="nucleotide sequence ID" value="XM_059887650.1"/>
</dbReference>
<dbReference type="RefSeq" id="XP_059743634.1">
    <property type="nucleotide sequence ID" value="XM_059887651.1"/>
</dbReference>
<dbReference type="RefSeq" id="XP_059743635.1">
    <property type="nucleotide sequence ID" value="XM_059887652.1"/>
</dbReference>
<dbReference type="RefSeq" id="XP_059743636.1">
    <property type="nucleotide sequence ID" value="XM_059887653.1"/>
</dbReference>
<dbReference type="RefSeq" id="XP_059743637.1">
    <property type="nucleotide sequence ID" value="XM_059887654.1"/>
</dbReference>
<dbReference type="FunCoup" id="Q2KIK3">
    <property type="interactions" value="2100"/>
</dbReference>
<dbReference type="STRING" id="9913.ENSBTAP00000019303"/>
<dbReference type="PaxDb" id="9913-ENSBTAP00000019303"/>
<dbReference type="GeneID" id="614774"/>
<dbReference type="KEGG" id="bta:614774"/>
<dbReference type="CTD" id="201895"/>
<dbReference type="VEuPathDB" id="HostDB:ENSBTAG00000014522"/>
<dbReference type="eggNOG" id="ENOG502S28C">
    <property type="taxonomic scope" value="Eukaryota"/>
</dbReference>
<dbReference type="HOGENOM" id="CLU_152284_0_0_1"/>
<dbReference type="InParanoid" id="Q2KIK3"/>
<dbReference type="OMA" id="ACTDTEC"/>
<dbReference type="OrthoDB" id="10054061at2759"/>
<dbReference type="TreeFam" id="TF314023"/>
<dbReference type="Proteomes" id="UP000009136">
    <property type="component" value="Chromosome 6"/>
</dbReference>
<dbReference type="Bgee" id="ENSBTAG00000014522">
    <property type="expression patterns" value="Expressed in liver and 111 other cell types or tissues"/>
</dbReference>
<dbReference type="GO" id="GO:0005783">
    <property type="term" value="C:endoplasmic reticulum"/>
    <property type="evidence" value="ECO:0000250"/>
    <property type="project" value="UniProtKB"/>
</dbReference>
<dbReference type="GO" id="GO:0005789">
    <property type="term" value="C:endoplasmic reticulum membrane"/>
    <property type="evidence" value="ECO:0007669"/>
    <property type="project" value="UniProtKB-SubCell"/>
</dbReference>
<dbReference type="GO" id="GO:0001835">
    <property type="term" value="P:blastocyst hatching"/>
    <property type="evidence" value="ECO:0007669"/>
    <property type="project" value="Ensembl"/>
</dbReference>
<dbReference type="InterPro" id="IPR020309">
    <property type="entry name" value="Uncharacterised_CD034/YQF4"/>
</dbReference>
<dbReference type="PANTHER" id="PTHR31019">
    <property type="entry name" value="SMALL INTEGRAL MEMBRANE PROTEIN 14"/>
    <property type="match status" value="1"/>
</dbReference>
<dbReference type="PANTHER" id="PTHR31019:SF1">
    <property type="entry name" value="SMALL INTEGRAL MEMBRANE PROTEIN 14"/>
    <property type="match status" value="1"/>
</dbReference>
<dbReference type="Pfam" id="PF11027">
    <property type="entry name" value="DUF2615"/>
    <property type="match status" value="1"/>
</dbReference>
<accession>Q2KIK3</accession>
<protein>
    <recommendedName>
        <fullName>Small integral membrane protein 14</fullName>
    </recommendedName>
</protein>
<proteinExistence type="inferred from homology"/>
<name>SIM14_BOVIN</name>
<keyword id="KW-0256">Endoplasmic reticulum</keyword>
<keyword id="KW-0472">Membrane</keyword>
<keyword id="KW-1185">Reference proteome</keyword>
<keyword id="KW-0812">Transmembrane</keyword>
<keyword id="KW-1133">Transmembrane helix</keyword>
<comment type="subcellular location">
    <subcellularLocation>
        <location evidence="1">Endoplasmic reticulum membrane</location>
        <topology evidence="1">Single-pass membrane protein</topology>
    </subcellularLocation>
</comment>
<reference key="1">
    <citation type="submission" date="2006-01" db="EMBL/GenBank/DDBJ databases">
        <authorList>
            <consortium name="NIH - Mammalian Gene Collection (MGC) project"/>
        </authorList>
    </citation>
    <scope>NUCLEOTIDE SEQUENCE [LARGE SCALE MRNA]</scope>
</reference>
<feature type="chain" id="PRO_0000268815" description="Small integral membrane protein 14">
    <location>
        <begin position="1"/>
        <end position="99"/>
    </location>
</feature>
<feature type="topological domain" description="Lumenal" evidence="2">
    <location>
        <begin position="1"/>
        <end position="49"/>
    </location>
</feature>
<feature type="transmembrane region" description="Helical" evidence="2">
    <location>
        <begin position="50"/>
        <end position="70"/>
    </location>
</feature>
<feature type="topological domain" description="Cytoplasmic" evidence="2">
    <location>
        <begin position="71"/>
        <end position="99"/>
    </location>
</feature>
<feature type="region of interest" description="Disordered" evidence="3">
    <location>
        <begin position="78"/>
        <end position="99"/>
    </location>
</feature>
<evidence type="ECO:0000250" key="1"/>
<evidence type="ECO:0000255" key="2"/>
<evidence type="ECO:0000256" key="3">
    <source>
        <dbReference type="SAM" id="MobiDB-lite"/>
    </source>
</evidence>
<gene>
    <name type="primary">SMIM14</name>
</gene>
<sequence>MAEGGFDPCECVCSHEHAMRRLINLLRQSQSYCTDTECLQELPGPSSDNGISITMILMAWMVIAVILFLLRPPNLRGSNLTGKPASPHNGQDPPAPPVD</sequence>
<organism>
    <name type="scientific">Bos taurus</name>
    <name type="common">Bovine</name>
    <dbReference type="NCBI Taxonomy" id="9913"/>
    <lineage>
        <taxon>Eukaryota</taxon>
        <taxon>Metazoa</taxon>
        <taxon>Chordata</taxon>
        <taxon>Craniata</taxon>
        <taxon>Vertebrata</taxon>
        <taxon>Euteleostomi</taxon>
        <taxon>Mammalia</taxon>
        <taxon>Eutheria</taxon>
        <taxon>Laurasiatheria</taxon>
        <taxon>Artiodactyla</taxon>
        <taxon>Ruminantia</taxon>
        <taxon>Pecora</taxon>
        <taxon>Bovidae</taxon>
        <taxon>Bovinae</taxon>
        <taxon>Bos</taxon>
    </lineage>
</organism>